<name>FUR_ECOLI</name>
<accession>P0A9A9</accession>
<accession>P06975</accession>
<evidence type="ECO:0000250" key="1"/>
<evidence type="ECO:0000269" key="2">
    <source>
    </source>
</evidence>
<evidence type="ECO:0000269" key="3">
    <source>
    </source>
</evidence>
<evidence type="ECO:0000269" key="4">
    <source>
    </source>
</evidence>
<evidence type="ECO:0000305" key="5"/>
<evidence type="ECO:0007829" key="6">
    <source>
        <dbReference type="PDB" id="2FU4"/>
    </source>
</evidence>
<keyword id="KW-0002">3D-structure</keyword>
<keyword id="KW-0963">Cytoplasm</keyword>
<keyword id="KW-0903">Direct protein sequencing</keyword>
<keyword id="KW-0238">DNA-binding</keyword>
<keyword id="KW-0408">Iron</keyword>
<keyword id="KW-0479">Metal-binding</keyword>
<keyword id="KW-0547">Nucleotide-binding</keyword>
<keyword id="KW-0597">Phosphoprotein</keyword>
<keyword id="KW-1185">Reference proteome</keyword>
<keyword id="KW-0678">Repressor</keyword>
<keyword id="KW-0804">Transcription</keyword>
<keyword id="KW-0805">Transcription regulation</keyword>
<keyword id="KW-0862">Zinc</keyword>
<gene>
    <name type="primary">fur</name>
    <name type="ordered locus">b0683</name>
    <name type="ordered locus">JW0669</name>
</gene>
<proteinExistence type="evidence at protein level"/>
<comment type="function">
    <text evidence="3">Acts as a global negative controlling element, employing Fe(2+) as a cofactor to bind the operator of the repressed genes. Regulates the expression of several outer-membrane proteins including the iron transport operon.</text>
</comment>
<comment type="activity regulation">
    <text evidence="4">UMPylation of Fur by SelO/YdiU splits the Fur dimers into monomers (PubMed:35532216). Fur loses its DNA binding activity and therefore its repressor activity, which induces the expression of genes involved in iron uptake (PubMed:35532216).</text>
</comment>
<comment type="subunit">
    <text evidence="1">Homodimer.</text>
</comment>
<comment type="subcellular location">
    <subcellularLocation>
        <location>Cytoplasm</location>
    </subcellularLocation>
</comment>
<comment type="PTM">
    <text evidence="4">Can be UMPylated on His-118 by SelO/YdiU.</text>
</comment>
<comment type="miscellaneous">
    <text>Activated by cadmium, cobalt, copper, and manganese ions, but not zinc ions.</text>
</comment>
<comment type="similarity">
    <text evidence="5">Belongs to the Fur family.</text>
</comment>
<protein>
    <recommendedName>
        <fullName>Ferric uptake regulation protein</fullName>
        <shortName>Ferric uptake regulator</shortName>
    </recommendedName>
</protein>
<feature type="initiator methionine" description="Removed" evidence="2">
    <location>
        <position position="1"/>
    </location>
</feature>
<feature type="chain" id="PRO_0000095550" description="Ferric uptake regulation protein">
    <location>
        <begin position="2"/>
        <end position="148"/>
    </location>
</feature>
<feature type="region of interest" description="DNA-binding" evidence="1">
    <location>
        <begin position="2"/>
        <end position="84"/>
    </location>
</feature>
<feature type="region of interest" description="Dimerization" evidence="1">
    <location>
        <begin position="85"/>
        <end position="148"/>
    </location>
</feature>
<feature type="binding site" evidence="1">
    <location>
        <position position="33"/>
    </location>
    <ligand>
        <name>Zn(2+)</name>
        <dbReference type="ChEBI" id="CHEBI:29105"/>
    </ligand>
</feature>
<feature type="binding site" evidence="1">
    <location>
        <position position="81"/>
    </location>
    <ligand>
        <name>Zn(2+)</name>
        <dbReference type="ChEBI" id="CHEBI:29105"/>
    </ligand>
</feature>
<feature type="binding site" evidence="1">
    <location>
        <position position="87"/>
    </location>
    <ligand>
        <name>Fe cation</name>
        <dbReference type="ChEBI" id="CHEBI:24875"/>
    </ligand>
</feature>
<feature type="binding site" evidence="1">
    <location>
        <position position="89"/>
    </location>
    <ligand>
        <name>Fe cation</name>
        <dbReference type="ChEBI" id="CHEBI:24875"/>
    </ligand>
</feature>
<feature type="binding site" evidence="1">
    <location>
        <position position="90"/>
    </location>
    <ligand>
        <name>Zn(2+)</name>
        <dbReference type="ChEBI" id="CHEBI:29105"/>
    </ligand>
</feature>
<feature type="binding site">
    <location>
        <position position="93"/>
    </location>
    <ligand>
        <name>Zn(2+)</name>
        <dbReference type="ChEBI" id="CHEBI:29105"/>
    </ligand>
</feature>
<feature type="binding site">
    <location>
        <position position="96"/>
    </location>
    <ligand>
        <name>Zn(2+)</name>
        <dbReference type="ChEBI" id="CHEBI:29105"/>
    </ligand>
</feature>
<feature type="binding site" evidence="1">
    <location>
        <position position="101"/>
    </location>
    <ligand>
        <name>Zn(2+)</name>
        <dbReference type="ChEBI" id="CHEBI:29105"/>
    </ligand>
</feature>
<feature type="binding site" evidence="1">
    <location>
        <position position="108"/>
    </location>
    <ligand>
        <name>Fe cation</name>
        <dbReference type="ChEBI" id="CHEBI:24875"/>
    </ligand>
</feature>
<feature type="binding site" evidence="1">
    <location>
        <position position="125"/>
    </location>
    <ligand>
        <name>Fe cation</name>
        <dbReference type="ChEBI" id="CHEBI:24875"/>
    </ligand>
</feature>
<feature type="modified residue" description="N(tele)-UMP-histidine; in inhibited form" evidence="4">
    <location>
        <position position="118"/>
    </location>
</feature>
<feature type="helix" evidence="6">
    <location>
        <begin position="4"/>
        <end position="10"/>
    </location>
</feature>
<feature type="helix" evidence="6">
    <location>
        <begin position="17"/>
        <end position="26"/>
    </location>
</feature>
<feature type="helix" evidence="6">
    <location>
        <begin position="29"/>
        <end position="31"/>
    </location>
</feature>
<feature type="strand" evidence="6">
    <location>
        <begin position="32"/>
        <end position="34"/>
    </location>
</feature>
<feature type="helix" evidence="6">
    <location>
        <begin position="36"/>
        <end position="45"/>
    </location>
</feature>
<feature type="helix" evidence="6">
    <location>
        <begin position="52"/>
        <end position="64"/>
    </location>
</feature>
<feature type="strand" evidence="6">
    <location>
        <begin position="67"/>
        <end position="72"/>
    </location>
</feature>
<feature type="helix" evidence="6">
    <location>
        <begin position="74"/>
        <end position="76"/>
    </location>
</feature>
<feature type="strand" evidence="6">
    <location>
        <begin position="78"/>
        <end position="82"/>
    </location>
</feature>
<sequence length="148" mass="16795">MTDNNTALKKAGLKVTLPRLKILEVLQEPDNHHVSAEDLYKRLIDMGEEIGLATVYRVLNQFDDAGIVTRHNFEGGKSVFELTQQHHHDHLICLDCGKVIEFSDDSIEARQREIAAKHGIRLTNHSLYLYGHCAEGDCREDEHAHEGK</sequence>
<reference key="1">
    <citation type="journal article" date="1985" name="Mol. Gen. Genet.">
        <title>Nucleotide sequence of the iron regulatory gene fur.</title>
        <authorList>
            <person name="Schaeffer S."/>
            <person name="Hantke K."/>
            <person name="Braun V."/>
        </authorList>
    </citation>
    <scope>NUCLEOTIDE SEQUENCE [GENOMIC DNA]</scope>
</reference>
<reference key="2">
    <citation type="journal article" date="1996" name="DNA Res.">
        <title>A 718-kb DNA sequence of the Escherichia coli K-12 genome corresponding to the 12.7-28.0 min region on the linkage map.</title>
        <authorList>
            <person name="Oshima T."/>
            <person name="Aiba H."/>
            <person name="Baba T."/>
            <person name="Fujita K."/>
            <person name="Hayashi K."/>
            <person name="Honjo A."/>
            <person name="Ikemoto K."/>
            <person name="Inada T."/>
            <person name="Itoh T."/>
            <person name="Kajihara M."/>
            <person name="Kanai K."/>
            <person name="Kashimoto K."/>
            <person name="Kimura S."/>
            <person name="Kitagawa M."/>
            <person name="Makino K."/>
            <person name="Masuda S."/>
            <person name="Miki T."/>
            <person name="Mizobuchi K."/>
            <person name="Mori H."/>
            <person name="Motomura K."/>
            <person name="Nakamura Y."/>
            <person name="Nashimoto H."/>
            <person name="Nishio Y."/>
            <person name="Saito N."/>
            <person name="Sampei G."/>
            <person name="Seki Y."/>
            <person name="Tagami H."/>
            <person name="Takemoto K."/>
            <person name="Wada C."/>
            <person name="Yamamoto Y."/>
            <person name="Yano M."/>
            <person name="Horiuchi T."/>
        </authorList>
    </citation>
    <scope>NUCLEOTIDE SEQUENCE [LARGE SCALE GENOMIC DNA]</scope>
    <source>
        <strain>K12 / W3110 / ATCC 27325 / DSM 5911</strain>
    </source>
</reference>
<reference key="3">
    <citation type="journal article" date="1997" name="Science">
        <title>The complete genome sequence of Escherichia coli K-12.</title>
        <authorList>
            <person name="Blattner F.R."/>
            <person name="Plunkett G. III"/>
            <person name="Bloch C.A."/>
            <person name="Perna N.T."/>
            <person name="Burland V."/>
            <person name="Riley M."/>
            <person name="Collado-Vides J."/>
            <person name="Glasner J.D."/>
            <person name="Rode C.K."/>
            <person name="Mayhew G.F."/>
            <person name="Gregor J."/>
            <person name="Davis N.W."/>
            <person name="Kirkpatrick H.A."/>
            <person name="Goeden M.A."/>
            <person name="Rose D.J."/>
            <person name="Mau B."/>
            <person name="Shao Y."/>
        </authorList>
    </citation>
    <scope>NUCLEOTIDE SEQUENCE [LARGE SCALE GENOMIC DNA]</scope>
    <source>
        <strain>K12 / MG1655 / ATCC 47076</strain>
    </source>
</reference>
<reference key="4">
    <citation type="journal article" date="2006" name="Mol. Syst. Biol.">
        <title>Highly accurate genome sequences of Escherichia coli K-12 strains MG1655 and W3110.</title>
        <authorList>
            <person name="Hayashi K."/>
            <person name="Morooka N."/>
            <person name="Yamamoto Y."/>
            <person name="Fujita K."/>
            <person name="Isono K."/>
            <person name="Choi S."/>
            <person name="Ohtsubo E."/>
            <person name="Baba T."/>
            <person name="Wanner B.L."/>
            <person name="Mori H."/>
            <person name="Horiuchi T."/>
        </authorList>
    </citation>
    <scope>NUCLEOTIDE SEQUENCE [LARGE SCALE GENOMIC DNA]</scope>
    <source>
        <strain>K12 / W3110 / ATCC 27325 / DSM 5911</strain>
    </source>
</reference>
<reference key="5">
    <citation type="journal article" date="2007" name="Genes Genet. Syst.">
        <title>A role of RnlA in the RNase LS activity from Escherichia coli.</title>
        <authorList>
            <person name="Otsuka Y."/>
            <person name="Koga M."/>
            <person name="Iwamoto A."/>
            <person name="Yonesaki T."/>
        </authorList>
    </citation>
    <scope>PROTEIN SEQUENCE OF 2-8</scope>
    <source>
        <strain>K12</strain>
    </source>
</reference>
<reference key="6">
    <citation type="journal article" date="1987" name="Biochemistry">
        <title>Ferric uptake regulation protein acts as a repressor, employing iron (II) as a cofactor to bind the operator of an iron transport operon in Escherichia coli.</title>
        <authorList>
            <person name="Bagg A."/>
            <person name="Neilands J.B."/>
        </authorList>
    </citation>
    <scope>FUNCTION</scope>
</reference>
<reference key="7">
    <citation type="journal article" date="1991" name="Biochemistry">
        <title>Structural dynamics and functional domains of the fur protein.</title>
        <authorList>
            <person name="Coy M."/>
            <person name="Neilands J.B."/>
        </authorList>
    </citation>
    <scope>STRUCTURAL DYNAMICS</scope>
</reference>
<reference key="8">
    <citation type="journal article" date="1997" name="Electrophoresis">
        <title>Escherichia coli proteome analysis using the gene-protein database.</title>
        <authorList>
            <person name="VanBogelen R.A."/>
            <person name="Abshire K.Z."/>
            <person name="Moldover B."/>
            <person name="Olson E.R."/>
            <person name="Neidhardt F.C."/>
        </authorList>
    </citation>
    <scope>IDENTIFICATION BY 2D-GEL</scope>
</reference>
<reference key="9">
    <citation type="journal article" date="1999" name="Biochemistry">
        <title>Identification of the two zinc-bound cysteines in the ferric uptake regulation protein from Escherichia coli: chemical modification and mass spectrometry analysis.</title>
        <authorList>
            <person name="Gonzalez de Peredo A."/>
            <person name="Saint-Pierre C."/>
            <person name="Adrait A."/>
            <person name="Jacquamet L."/>
            <person name="Latour J.M."/>
            <person name="Michaud-Soret I."/>
            <person name="Forest E."/>
        </authorList>
    </citation>
    <scope>ZINC-BINDING SITES</scope>
</reference>
<reference key="10">
    <citation type="journal article" date="2022" name="MBio">
        <title>Salmonella Facilitates Iron Acquisition through UMPylation of Ferric Uptake Regulator.</title>
        <authorList>
            <person name="Jia H."/>
            <person name="Song N."/>
            <person name="Ma Y."/>
            <person name="Zhang F."/>
            <person name="Yue Y."/>
            <person name="Wang W."/>
            <person name="Li C."/>
            <person name="Li H."/>
            <person name="Wang Q."/>
            <person name="Gu L."/>
            <person name="Li B."/>
        </authorList>
    </citation>
    <scope>ACTIVITY REGULATION</scope>
    <scope>URIDYLYLATION AT HIS-118</scope>
</reference>
<reference key="11">
    <citation type="journal article" date="1991" name="Eur. J. Biochem.">
        <title>The binding of the ferric uptake regulation protein to a DNA fragment.</title>
        <authorList>
            <person name="Saito T."/>
            <person name="Williams R.J."/>
        </authorList>
    </citation>
    <scope>STRUCTURE BY NMR</scope>
</reference>
<dbReference type="EMBL" id="X02589">
    <property type="protein sequence ID" value="CAA26429.1"/>
    <property type="molecule type" value="Genomic_DNA"/>
</dbReference>
<dbReference type="EMBL" id="U00096">
    <property type="protein sequence ID" value="AAC73777.1"/>
    <property type="molecule type" value="Genomic_DNA"/>
</dbReference>
<dbReference type="EMBL" id="AP009048">
    <property type="protein sequence ID" value="BAA35331.1"/>
    <property type="molecule type" value="Genomic_DNA"/>
</dbReference>
<dbReference type="PIR" id="S07308">
    <property type="entry name" value="S07308"/>
</dbReference>
<dbReference type="RefSeq" id="NP_415209.1">
    <property type="nucleotide sequence ID" value="NC_000913.3"/>
</dbReference>
<dbReference type="RefSeq" id="WP_000131702.1">
    <property type="nucleotide sequence ID" value="NZ_STEB01000044.1"/>
</dbReference>
<dbReference type="PDB" id="2FU4">
    <property type="method" value="X-ray"/>
    <property type="resolution" value="1.80 A"/>
    <property type="chains" value="A/B=1-83"/>
</dbReference>
<dbReference type="PDB" id="8J6W">
    <property type="method" value="X-ray"/>
    <property type="resolution" value="2.66 A"/>
    <property type="chains" value="A=1-148"/>
</dbReference>
<dbReference type="PDBsum" id="2FU4"/>
<dbReference type="PDBsum" id="8J6W"/>
<dbReference type="BMRB" id="P0A9A9"/>
<dbReference type="SMR" id="P0A9A9"/>
<dbReference type="BioGRID" id="4262110">
    <property type="interactions" value="197"/>
</dbReference>
<dbReference type="BioGRID" id="849672">
    <property type="interactions" value="1"/>
</dbReference>
<dbReference type="DIP" id="DIP-31858N"/>
<dbReference type="FunCoup" id="P0A9A9">
    <property type="interactions" value="995"/>
</dbReference>
<dbReference type="IntAct" id="P0A9A9">
    <property type="interactions" value="50"/>
</dbReference>
<dbReference type="STRING" id="511145.b0683"/>
<dbReference type="jPOST" id="P0A9A9"/>
<dbReference type="PaxDb" id="511145-b0683"/>
<dbReference type="EnsemblBacteria" id="AAC73777">
    <property type="protein sequence ID" value="AAC73777"/>
    <property type="gene ID" value="b0683"/>
</dbReference>
<dbReference type="GeneID" id="93776802"/>
<dbReference type="GeneID" id="945295"/>
<dbReference type="KEGG" id="ecj:JW0669"/>
<dbReference type="KEGG" id="eco:b0683"/>
<dbReference type="KEGG" id="ecoc:C3026_03395"/>
<dbReference type="PATRIC" id="fig|1411691.4.peg.1593"/>
<dbReference type="EchoBASE" id="EB0354"/>
<dbReference type="eggNOG" id="COG0735">
    <property type="taxonomic scope" value="Bacteria"/>
</dbReference>
<dbReference type="HOGENOM" id="CLU_096072_3_3_6"/>
<dbReference type="InParanoid" id="P0A9A9"/>
<dbReference type="OMA" id="HDHVILT"/>
<dbReference type="OrthoDB" id="8659436at2"/>
<dbReference type="PhylomeDB" id="P0A9A9"/>
<dbReference type="BioCyc" id="EcoCyc:PD00260"/>
<dbReference type="EvolutionaryTrace" id="P0A9A9"/>
<dbReference type="PHI-base" id="PHI:4887"/>
<dbReference type="PRO" id="PR:P0A9A9"/>
<dbReference type="Proteomes" id="UP000000625">
    <property type="component" value="Chromosome"/>
</dbReference>
<dbReference type="CollecTF" id="EXPREG_000007c0"/>
<dbReference type="GO" id="GO:0005829">
    <property type="term" value="C:cytosol"/>
    <property type="evidence" value="ECO:0000314"/>
    <property type="project" value="EcoCyc"/>
</dbReference>
<dbReference type="GO" id="GO:0032993">
    <property type="term" value="C:protein-DNA complex"/>
    <property type="evidence" value="ECO:0000315"/>
    <property type="project" value="CollecTF"/>
</dbReference>
<dbReference type="GO" id="GO:0001216">
    <property type="term" value="F:DNA-binding transcription activator activity"/>
    <property type="evidence" value="ECO:0000353"/>
    <property type="project" value="CollecTF"/>
</dbReference>
<dbReference type="GO" id="GO:0003700">
    <property type="term" value="F:DNA-binding transcription factor activity"/>
    <property type="evidence" value="ECO:0000318"/>
    <property type="project" value="GO_Central"/>
</dbReference>
<dbReference type="GO" id="GO:0001217">
    <property type="term" value="F:DNA-binding transcription repressor activity"/>
    <property type="evidence" value="ECO:0000315"/>
    <property type="project" value="CollecTF"/>
</dbReference>
<dbReference type="GO" id="GO:0043565">
    <property type="term" value="F:sequence-specific DNA binding"/>
    <property type="evidence" value="ECO:0000353"/>
    <property type="project" value="CollecTF"/>
</dbReference>
<dbReference type="GO" id="GO:0000976">
    <property type="term" value="F:transcription cis-regulatory region binding"/>
    <property type="evidence" value="ECO:0000315"/>
    <property type="project" value="CollecTF"/>
</dbReference>
<dbReference type="GO" id="GO:0008270">
    <property type="term" value="F:zinc ion binding"/>
    <property type="evidence" value="ECO:0000314"/>
    <property type="project" value="EcoliWiki"/>
</dbReference>
<dbReference type="GO" id="GO:0045892">
    <property type="term" value="P:negative regulation of DNA-templated transcription"/>
    <property type="evidence" value="ECO:0000270"/>
    <property type="project" value="CollecTF"/>
</dbReference>
<dbReference type="GO" id="GO:1900705">
    <property type="term" value="P:negative regulation of siderophore biosynthetic process"/>
    <property type="evidence" value="ECO:0000318"/>
    <property type="project" value="GO_Central"/>
</dbReference>
<dbReference type="GO" id="GO:0045893">
    <property type="term" value="P:positive regulation of DNA-templated transcription"/>
    <property type="evidence" value="ECO:0000314"/>
    <property type="project" value="CollecTF"/>
</dbReference>
<dbReference type="CDD" id="cd07153">
    <property type="entry name" value="Fur_like"/>
    <property type="match status" value="1"/>
</dbReference>
<dbReference type="FunFam" id="1.10.10.10:FF:000007">
    <property type="entry name" value="Ferric uptake regulation protein"/>
    <property type="match status" value="1"/>
</dbReference>
<dbReference type="FunFam" id="3.30.1490.190:FF:000001">
    <property type="entry name" value="Ferric uptake regulation protein"/>
    <property type="match status" value="1"/>
</dbReference>
<dbReference type="Gene3D" id="3.30.1490.190">
    <property type="match status" value="1"/>
</dbReference>
<dbReference type="Gene3D" id="1.10.10.10">
    <property type="entry name" value="Winged helix-like DNA-binding domain superfamily/Winged helix DNA-binding domain"/>
    <property type="match status" value="1"/>
</dbReference>
<dbReference type="InterPro" id="IPR002481">
    <property type="entry name" value="FUR"/>
</dbReference>
<dbReference type="InterPro" id="IPR043135">
    <property type="entry name" value="Fur_C"/>
</dbReference>
<dbReference type="InterPro" id="IPR036388">
    <property type="entry name" value="WH-like_DNA-bd_sf"/>
</dbReference>
<dbReference type="InterPro" id="IPR036390">
    <property type="entry name" value="WH_DNA-bd_sf"/>
</dbReference>
<dbReference type="NCBIfam" id="NF006999">
    <property type="entry name" value="PRK09462.1"/>
    <property type="match status" value="1"/>
</dbReference>
<dbReference type="PANTHER" id="PTHR33202:SF2">
    <property type="entry name" value="FERRIC UPTAKE REGULATION PROTEIN"/>
    <property type="match status" value="1"/>
</dbReference>
<dbReference type="PANTHER" id="PTHR33202">
    <property type="entry name" value="ZINC UPTAKE REGULATION PROTEIN"/>
    <property type="match status" value="1"/>
</dbReference>
<dbReference type="Pfam" id="PF01475">
    <property type="entry name" value="FUR"/>
    <property type="match status" value="1"/>
</dbReference>
<dbReference type="SUPFAM" id="SSF46785">
    <property type="entry name" value="Winged helix' DNA-binding domain"/>
    <property type="match status" value="1"/>
</dbReference>
<organism>
    <name type="scientific">Escherichia coli (strain K12)</name>
    <dbReference type="NCBI Taxonomy" id="83333"/>
    <lineage>
        <taxon>Bacteria</taxon>
        <taxon>Pseudomonadati</taxon>
        <taxon>Pseudomonadota</taxon>
        <taxon>Gammaproteobacteria</taxon>
        <taxon>Enterobacterales</taxon>
        <taxon>Enterobacteriaceae</taxon>
        <taxon>Escherichia</taxon>
    </lineage>
</organism>